<dbReference type="EMBL" id="AP010904">
    <property type="protein sequence ID" value="BAH74419.1"/>
    <property type="molecule type" value="Genomic_DNA"/>
</dbReference>
<dbReference type="RefSeq" id="WP_012750490.1">
    <property type="nucleotide sequence ID" value="NC_012796.1"/>
</dbReference>
<dbReference type="SMR" id="C4XKM8"/>
<dbReference type="STRING" id="573370.DMR_09290"/>
<dbReference type="KEGG" id="dma:DMR_09290"/>
<dbReference type="eggNOG" id="COG2060">
    <property type="taxonomic scope" value="Bacteria"/>
</dbReference>
<dbReference type="HOGENOM" id="CLU_018614_3_0_7"/>
<dbReference type="OrthoDB" id="9763796at2"/>
<dbReference type="Proteomes" id="UP000009071">
    <property type="component" value="Chromosome"/>
</dbReference>
<dbReference type="GO" id="GO:0005886">
    <property type="term" value="C:plasma membrane"/>
    <property type="evidence" value="ECO:0007669"/>
    <property type="project" value="UniProtKB-SubCell"/>
</dbReference>
<dbReference type="GO" id="GO:0008556">
    <property type="term" value="F:P-type potassium transmembrane transporter activity"/>
    <property type="evidence" value="ECO:0007669"/>
    <property type="project" value="InterPro"/>
</dbReference>
<dbReference type="GO" id="GO:0030955">
    <property type="term" value="F:potassium ion binding"/>
    <property type="evidence" value="ECO:0007669"/>
    <property type="project" value="UniProtKB-UniRule"/>
</dbReference>
<dbReference type="HAMAP" id="MF_00275">
    <property type="entry name" value="KdpA"/>
    <property type="match status" value="1"/>
</dbReference>
<dbReference type="InterPro" id="IPR004623">
    <property type="entry name" value="KdpA"/>
</dbReference>
<dbReference type="NCBIfam" id="TIGR00680">
    <property type="entry name" value="kdpA"/>
    <property type="match status" value="1"/>
</dbReference>
<dbReference type="PANTHER" id="PTHR30607">
    <property type="entry name" value="POTASSIUM-TRANSPORTING ATPASE A CHAIN"/>
    <property type="match status" value="1"/>
</dbReference>
<dbReference type="PANTHER" id="PTHR30607:SF2">
    <property type="entry name" value="POTASSIUM-TRANSPORTING ATPASE POTASSIUM-BINDING SUBUNIT"/>
    <property type="match status" value="1"/>
</dbReference>
<dbReference type="Pfam" id="PF03814">
    <property type="entry name" value="KdpA"/>
    <property type="match status" value="1"/>
</dbReference>
<dbReference type="PIRSF" id="PIRSF001294">
    <property type="entry name" value="K_ATPaseA"/>
    <property type="match status" value="1"/>
</dbReference>
<feature type="chain" id="PRO_1000204783" description="Potassium-transporting ATPase potassium-binding subunit">
    <location>
        <begin position="1"/>
        <end position="582"/>
    </location>
</feature>
<feature type="transmembrane region" description="Helical" evidence="1">
    <location>
        <begin position="6"/>
        <end position="26"/>
    </location>
</feature>
<feature type="transmembrane region" description="Helical" evidence="1">
    <location>
        <begin position="65"/>
        <end position="85"/>
    </location>
</feature>
<feature type="transmembrane region" description="Helical" evidence="1">
    <location>
        <begin position="87"/>
        <end position="107"/>
    </location>
</feature>
<feature type="transmembrane region" description="Helical" evidence="1">
    <location>
        <begin position="136"/>
        <end position="156"/>
    </location>
</feature>
<feature type="transmembrane region" description="Helical" evidence="1">
    <location>
        <begin position="178"/>
        <end position="198"/>
    </location>
</feature>
<feature type="transmembrane region" description="Helical" evidence="1">
    <location>
        <begin position="277"/>
        <end position="297"/>
    </location>
</feature>
<feature type="transmembrane region" description="Helical" evidence="1">
    <location>
        <begin position="304"/>
        <end position="324"/>
    </location>
</feature>
<feature type="transmembrane region" description="Helical" evidence="1">
    <location>
        <begin position="402"/>
        <end position="422"/>
    </location>
</feature>
<feature type="transmembrane region" description="Helical" evidence="1">
    <location>
        <begin position="441"/>
        <end position="461"/>
    </location>
</feature>
<feature type="transmembrane region" description="Helical" evidence="1">
    <location>
        <begin position="505"/>
        <end position="525"/>
    </location>
</feature>
<feature type="transmembrane region" description="Helical" evidence="1">
    <location>
        <begin position="546"/>
        <end position="566"/>
    </location>
</feature>
<name>KDPA_SOLM1</name>
<comment type="function">
    <text evidence="1">Part of the high-affinity ATP-driven potassium transport (or Kdp) system, which catalyzes the hydrolysis of ATP coupled with the electrogenic transport of potassium into the cytoplasm. This subunit binds the periplasmic potassium ions and delivers the ions to the membrane domain of KdpB through an intramembrane tunnel.</text>
</comment>
<comment type="subunit">
    <text evidence="1">The system is composed of three essential subunits: KdpA, KdpB and KdpC.</text>
</comment>
<comment type="subcellular location">
    <subcellularLocation>
        <location evidence="1">Cell inner membrane</location>
        <topology evidence="1">Multi-pass membrane protein</topology>
    </subcellularLocation>
</comment>
<comment type="similarity">
    <text evidence="1">Belongs to the KdpA family.</text>
</comment>
<gene>
    <name evidence="1" type="primary">kdpA</name>
    <name type="ordered locus">DMR_09290</name>
</gene>
<proteinExistence type="inferred from homology"/>
<protein>
    <recommendedName>
        <fullName evidence="1">Potassium-transporting ATPase potassium-binding subunit</fullName>
    </recommendedName>
    <alternativeName>
        <fullName evidence="1">ATP phosphohydrolase [potassium-transporting] A chain</fullName>
    </alternativeName>
    <alternativeName>
        <fullName evidence="1">Potassium-binding and translocating subunit A</fullName>
    </alternativeName>
    <alternativeName>
        <fullName evidence="1">Potassium-translocating ATPase A chain</fullName>
    </alternativeName>
</protein>
<accession>C4XKM8</accession>
<reference key="1">
    <citation type="journal article" date="2009" name="Genome Res.">
        <title>Whole genome sequence of Desulfovibrio magneticus strain RS-1 revealed common gene clusters in magnetotactic bacteria.</title>
        <authorList>
            <person name="Nakazawa H."/>
            <person name="Arakaki A."/>
            <person name="Narita-Yamada S."/>
            <person name="Yashiro I."/>
            <person name="Jinno K."/>
            <person name="Aoki N."/>
            <person name="Tsuruyama A."/>
            <person name="Okamura Y."/>
            <person name="Tanikawa S."/>
            <person name="Fujita N."/>
            <person name="Takeyama H."/>
            <person name="Matsunaga T."/>
        </authorList>
    </citation>
    <scope>NUCLEOTIDE SEQUENCE [LARGE SCALE GENOMIC DNA]</scope>
    <source>
        <strain>ATCC 700980 / DSM 13731 / RS-1</strain>
    </source>
</reference>
<organism>
    <name type="scientific">Solidesulfovibrio magneticus (strain ATCC 700980 / DSM 13731 / RS-1)</name>
    <name type="common">Desulfovibrio magneticus</name>
    <dbReference type="NCBI Taxonomy" id="573370"/>
    <lineage>
        <taxon>Bacteria</taxon>
        <taxon>Pseudomonadati</taxon>
        <taxon>Thermodesulfobacteriota</taxon>
        <taxon>Desulfovibrionia</taxon>
        <taxon>Desulfovibrionales</taxon>
        <taxon>Desulfovibrionaceae</taxon>
        <taxon>Solidesulfovibrio</taxon>
    </lineage>
</organism>
<evidence type="ECO:0000255" key="1">
    <source>
        <dbReference type="HAMAP-Rule" id="MF_00275"/>
    </source>
</evidence>
<sequence length="582" mass="61223">MNPINLVQLLFFLSVLLVLSWPLGLYAARVYQGQPCVMDKILGPLERLLYRISGVDASREMDWKIYALVMLGLNAFGMVFVYVLERLQGGLPLNPLHLPGVDPFVAVNTAVSFATNTNWQAYAGESTMSILTQMLGLAVQNFLSAATGMAVAVALIRGLARRETTHLGNFWQDLTRSVLYILLPLSFVLALLLVWQGVPQTFTGQVEADWLDPAPHVAESISPDTPSTDQPPAKQTIVLGPVASQVAIKQLGTNGGGYFNVNSAHPLENPTPLTNLLEMLAILLIPAALCHTFGVMIGDRRQGLAILAAMTILFAGFAALTLAAESVPNPTLSGIGVPAVPSLEGKEVRFGTAGSALWAAATTAASNGSVNAMHDSFSPLGGMWPMLLMQLGEVVYGGVGSGLYGMLVFAVVTVFVAGLMVGRTPEYCGKKIEPFETKMAALVILIPPFLCLAGTALAAVIGPADAVSNPGPHGFSQMLYAFSSMGNNNGSAFAGLTATSPFWTIAGAVAMFVSRYWLIVPVLALAGSLAGKKRLAQGPGTLPTHGGIFVALLIIVVLVVGALTFVPALALGPIAEQLALFQ</sequence>
<keyword id="KW-0997">Cell inner membrane</keyword>
<keyword id="KW-1003">Cell membrane</keyword>
<keyword id="KW-0406">Ion transport</keyword>
<keyword id="KW-0472">Membrane</keyword>
<keyword id="KW-0630">Potassium</keyword>
<keyword id="KW-0633">Potassium transport</keyword>
<keyword id="KW-0812">Transmembrane</keyword>
<keyword id="KW-1133">Transmembrane helix</keyword>
<keyword id="KW-0813">Transport</keyword>